<evidence type="ECO:0000255" key="1">
    <source>
        <dbReference type="HAMAP-Rule" id="MF_00500"/>
    </source>
</evidence>
<evidence type="ECO:0000305" key="2"/>
<protein>
    <recommendedName>
        <fullName evidence="1">Small ribosomal subunit protein bS20</fullName>
    </recommendedName>
    <alternativeName>
        <fullName evidence="2">30S ribosomal protein S20</fullName>
    </alternativeName>
</protein>
<sequence length="97" mass="11004">MANNKSAKKRIQVAERNRLVNKSYKSTVRTLTKKTLANCEKYKQEPNSDNKDLVLVSVNQAFSLIDKAVKKNVLHKNNGANKKSKINKVVKDFLTSK</sequence>
<proteinExistence type="inferred from homology"/>
<name>RS20_PROMP</name>
<gene>
    <name evidence="1" type="primary">rpsT</name>
    <name evidence="1" type="synonym">rps20</name>
    <name type="ordered locus">PMM1487</name>
</gene>
<dbReference type="EMBL" id="BX548174">
    <property type="protein sequence ID" value="CAE19946.1"/>
    <property type="molecule type" value="Genomic_DNA"/>
</dbReference>
<dbReference type="RefSeq" id="WP_011133115.1">
    <property type="nucleotide sequence ID" value="NC_005072.1"/>
</dbReference>
<dbReference type="SMR" id="Q7TU38"/>
<dbReference type="STRING" id="59919.PMM1487"/>
<dbReference type="KEGG" id="pmm:PMM1487"/>
<dbReference type="eggNOG" id="COG0268">
    <property type="taxonomic scope" value="Bacteria"/>
</dbReference>
<dbReference type="HOGENOM" id="CLU_160655_5_0_3"/>
<dbReference type="OrthoDB" id="9808392at2"/>
<dbReference type="Proteomes" id="UP000001026">
    <property type="component" value="Chromosome"/>
</dbReference>
<dbReference type="GO" id="GO:0015935">
    <property type="term" value="C:small ribosomal subunit"/>
    <property type="evidence" value="ECO:0007669"/>
    <property type="project" value="TreeGrafter"/>
</dbReference>
<dbReference type="GO" id="GO:0070181">
    <property type="term" value="F:small ribosomal subunit rRNA binding"/>
    <property type="evidence" value="ECO:0007669"/>
    <property type="project" value="TreeGrafter"/>
</dbReference>
<dbReference type="GO" id="GO:0003735">
    <property type="term" value="F:structural constituent of ribosome"/>
    <property type="evidence" value="ECO:0007669"/>
    <property type="project" value="InterPro"/>
</dbReference>
<dbReference type="GO" id="GO:0006412">
    <property type="term" value="P:translation"/>
    <property type="evidence" value="ECO:0007669"/>
    <property type="project" value="UniProtKB-UniRule"/>
</dbReference>
<dbReference type="Gene3D" id="1.20.58.110">
    <property type="entry name" value="Ribosomal protein S20"/>
    <property type="match status" value="1"/>
</dbReference>
<dbReference type="HAMAP" id="MF_00500">
    <property type="entry name" value="Ribosomal_bS20"/>
    <property type="match status" value="1"/>
</dbReference>
<dbReference type="InterPro" id="IPR002583">
    <property type="entry name" value="Ribosomal_bS20"/>
</dbReference>
<dbReference type="InterPro" id="IPR036510">
    <property type="entry name" value="Ribosomal_bS20_sf"/>
</dbReference>
<dbReference type="NCBIfam" id="TIGR00029">
    <property type="entry name" value="S20"/>
    <property type="match status" value="1"/>
</dbReference>
<dbReference type="PANTHER" id="PTHR33398">
    <property type="entry name" value="30S RIBOSOMAL PROTEIN S20"/>
    <property type="match status" value="1"/>
</dbReference>
<dbReference type="PANTHER" id="PTHR33398:SF1">
    <property type="entry name" value="SMALL RIBOSOMAL SUBUNIT PROTEIN BS20C"/>
    <property type="match status" value="1"/>
</dbReference>
<dbReference type="Pfam" id="PF01649">
    <property type="entry name" value="Ribosomal_S20p"/>
    <property type="match status" value="1"/>
</dbReference>
<dbReference type="SUPFAM" id="SSF46992">
    <property type="entry name" value="Ribosomal protein S20"/>
    <property type="match status" value="1"/>
</dbReference>
<organism>
    <name type="scientific">Prochlorococcus marinus subsp. pastoris (strain CCMP1986 / NIES-2087 / MED4)</name>
    <dbReference type="NCBI Taxonomy" id="59919"/>
    <lineage>
        <taxon>Bacteria</taxon>
        <taxon>Bacillati</taxon>
        <taxon>Cyanobacteriota</taxon>
        <taxon>Cyanophyceae</taxon>
        <taxon>Synechococcales</taxon>
        <taxon>Prochlorococcaceae</taxon>
        <taxon>Prochlorococcus</taxon>
    </lineage>
</organism>
<keyword id="KW-0687">Ribonucleoprotein</keyword>
<keyword id="KW-0689">Ribosomal protein</keyword>
<keyword id="KW-0694">RNA-binding</keyword>
<keyword id="KW-0699">rRNA-binding</keyword>
<accession>Q7TU38</accession>
<reference key="1">
    <citation type="journal article" date="2003" name="Nature">
        <title>Genome divergence in two Prochlorococcus ecotypes reflects oceanic niche differentiation.</title>
        <authorList>
            <person name="Rocap G."/>
            <person name="Larimer F.W."/>
            <person name="Lamerdin J.E."/>
            <person name="Malfatti S."/>
            <person name="Chain P."/>
            <person name="Ahlgren N.A."/>
            <person name="Arellano A."/>
            <person name="Coleman M."/>
            <person name="Hauser L."/>
            <person name="Hess W.R."/>
            <person name="Johnson Z.I."/>
            <person name="Land M.L."/>
            <person name="Lindell D."/>
            <person name="Post A.F."/>
            <person name="Regala W."/>
            <person name="Shah M."/>
            <person name="Shaw S.L."/>
            <person name="Steglich C."/>
            <person name="Sullivan M.B."/>
            <person name="Ting C.S."/>
            <person name="Tolonen A."/>
            <person name="Webb E.A."/>
            <person name="Zinser E.R."/>
            <person name="Chisholm S.W."/>
        </authorList>
    </citation>
    <scope>NUCLEOTIDE SEQUENCE [LARGE SCALE GENOMIC DNA]</scope>
    <source>
        <strain>CCMP1986 / NIES-2087 / MED4</strain>
    </source>
</reference>
<comment type="function">
    <text evidence="1">Binds directly to 16S ribosomal RNA.</text>
</comment>
<comment type="similarity">
    <text evidence="1">Belongs to the bacterial ribosomal protein bS20 family.</text>
</comment>
<feature type="chain" id="PRO_0000168013" description="Small ribosomal subunit protein bS20">
    <location>
        <begin position="1"/>
        <end position="97"/>
    </location>
</feature>